<evidence type="ECO:0000255" key="1">
    <source>
        <dbReference type="HAMAP-Rule" id="MF_01966"/>
    </source>
</evidence>
<comment type="function">
    <text evidence="1">Catalyzes the epimerization of the S- and R-forms of NAD(P)HX, a damaged form of NAD(P)H that is a result of enzymatic or heat-dependent hydration. This is a prerequisite for the S-specific NAD(P)H-hydrate dehydratase to allow the repair of both epimers of NAD(P)HX.</text>
</comment>
<comment type="catalytic activity">
    <reaction evidence="1">
        <text>(6R)-NADHX = (6S)-NADHX</text>
        <dbReference type="Rhea" id="RHEA:32215"/>
        <dbReference type="ChEBI" id="CHEBI:64074"/>
        <dbReference type="ChEBI" id="CHEBI:64075"/>
        <dbReference type="EC" id="5.1.99.6"/>
    </reaction>
</comment>
<comment type="catalytic activity">
    <reaction evidence="1">
        <text>(6R)-NADPHX = (6S)-NADPHX</text>
        <dbReference type="Rhea" id="RHEA:32227"/>
        <dbReference type="ChEBI" id="CHEBI:64076"/>
        <dbReference type="ChEBI" id="CHEBI:64077"/>
        <dbReference type="EC" id="5.1.99.6"/>
    </reaction>
</comment>
<comment type="cofactor">
    <cofactor evidence="1">
        <name>K(+)</name>
        <dbReference type="ChEBI" id="CHEBI:29103"/>
    </cofactor>
    <text evidence="1">Binds 1 potassium ion per subunit.</text>
</comment>
<comment type="similarity">
    <text evidence="1">Belongs to the NnrE/AIBP family.</text>
</comment>
<proteinExistence type="inferred from homology"/>
<name>NNRE_CENSY</name>
<protein>
    <recommendedName>
        <fullName evidence="1">NAD(P)H-hydrate epimerase</fullName>
        <ecNumber evidence="1">5.1.99.6</ecNumber>
    </recommendedName>
    <alternativeName>
        <fullName evidence="1">NAD(P)HX epimerase</fullName>
    </alternativeName>
</protein>
<keyword id="KW-0413">Isomerase</keyword>
<keyword id="KW-0479">Metal-binding</keyword>
<keyword id="KW-0520">NAD</keyword>
<keyword id="KW-0521">NADP</keyword>
<keyword id="KW-0547">Nucleotide-binding</keyword>
<keyword id="KW-0630">Potassium</keyword>
<keyword id="KW-1185">Reference proteome</keyword>
<reference key="1">
    <citation type="journal article" date="2006" name="Proc. Natl. Acad. Sci. U.S.A.">
        <title>Genomic analysis of the uncultivated marine crenarchaeote Cenarchaeum symbiosum.</title>
        <authorList>
            <person name="Hallam S.J."/>
            <person name="Konstantinidis K.T."/>
            <person name="Putnam N."/>
            <person name="Schleper C."/>
            <person name="Watanabe Y."/>
            <person name="Sugahara J."/>
            <person name="Preston C."/>
            <person name="de la Torre J."/>
            <person name="Richardson P.M."/>
            <person name="DeLong E.F."/>
        </authorList>
    </citation>
    <scope>NUCLEOTIDE SEQUENCE [LARGE SCALE GENOMIC DNA]</scope>
    <source>
        <strain>A</strain>
    </source>
</reference>
<dbReference type="EC" id="5.1.99.6" evidence="1"/>
<dbReference type="EMBL" id="DP000238">
    <property type="protein sequence ID" value="ABK78223.1"/>
    <property type="molecule type" value="Genomic_DNA"/>
</dbReference>
<dbReference type="SMR" id="A0RY06"/>
<dbReference type="STRING" id="414004.CENSYa_1603"/>
<dbReference type="EnsemblBacteria" id="ABK78223">
    <property type="protein sequence ID" value="ABK78223"/>
    <property type="gene ID" value="CENSYa_1603"/>
</dbReference>
<dbReference type="KEGG" id="csy:CENSYa_1603"/>
<dbReference type="PATRIC" id="fig|414004.10.peg.1466"/>
<dbReference type="HOGENOM" id="CLU_024853_0_1_2"/>
<dbReference type="Proteomes" id="UP000000758">
    <property type="component" value="Chromosome"/>
</dbReference>
<dbReference type="GO" id="GO:0046872">
    <property type="term" value="F:metal ion binding"/>
    <property type="evidence" value="ECO:0007669"/>
    <property type="project" value="UniProtKB-KW"/>
</dbReference>
<dbReference type="GO" id="GO:0052856">
    <property type="term" value="F:NAD(P)HX epimerase activity"/>
    <property type="evidence" value="ECO:0007669"/>
    <property type="project" value="UniProtKB-UniRule"/>
</dbReference>
<dbReference type="GO" id="GO:0000166">
    <property type="term" value="F:nucleotide binding"/>
    <property type="evidence" value="ECO:0007669"/>
    <property type="project" value="UniProtKB-KW"/>
</dbReference>
<dbReference type="Gene3D" id="3.40.50.10260">
    <property type="entry name" value="YjeF N-terminal domain"/>
    <property type="match status" value="1"/>
</dbReference>
<dbReference type="HAMAP" id="MF_01966">
    <property type="entry name" value="NADHX_epimerase"/>
    <property type="match status" value="1"/>
</dbReference>
<dbReference type="InterPro" id="IPR004443">
    <property type="entry name" value="YjeF_N_dom"/>
</dbReference>
<dbReference type="InterPro" id="IPR036652">
    <property type="entry name" value="YjeF_N_dom_sf"/>
</dbReference>
<dbReference type="NCBIfam" id="TIGR00197">
    <property type="entry name" value="yjeF_nterm"/>
    <property type="match status" value="1"/>
</dbReference>
<dbReference type="Pfam" id="PF03853">
    <property type="entry name" value="YjeF_N"/>
    <property type="match status" value="1"/>
</dbReference>
<dbReference type="SUPFAM" id="SSF64153">
    <property type="entry name" value="YjeF N-terminal domain-like"/>
    <property type="match status" value="1"/>
</dbReference>
<dbReference type="PROSITE" id="PS51385">
    <property type="entry name" value="YJEF_N"/>
    <property type="match status" value="1"/>
</dbReference>
<sequence>MDISVKQMYNIEENGHAMGFLKKFMMENAGAAAARLLDERLEGAPRVLAFAGMGNNGGDALVAARHLAGRGADVTVVLLGNPDGIRTEEARWNWSILEKMPSIKLVSGGSFDASVSPDAIIDGILGTGITGEIREPYLSAIKFINGIQCTKMAIDAPSGLDPQTGEAADPCVKVDFTVTFHRMKEGIPKRKDLTGDVTVQKIGIPPEAEKGVL</sequence>
<gene>
    <name evidence="1" type="primary">nnrE</name>
    <name type="ordered locus">CENSYa_1603</name>
</gene>
<feature type="chain" id="PRO_0000416381" description="NAD(P)H-hydrate epimerase">
    <location>
        <begin position="1"/>
        <end position="213"/>
    </location>
</feature>
<feature type="domain" description="YjeF N-terminal" evidence="1">
    <location>
        <begin position="8"/>
        <end position="210"/>
    </location>
</feature>
<feature type="binding site" evidence="1">
    <location>
        <begin position="55"/>
        <end position="59"/>
    </location>
    <ligand>
        <name>(6S)-NADPHX</name>
        <dbReference type="ChEBI" id="CHEBI:64076"/>
    </ligand>
</feature>
<feature type="binding site" evidence="1">
    <location>
        <position position="56"/>
    </location>
    <ligand>
        <name>K(+)</name>
        <dbReference type="ChEBI" id="CHEBI:29103"/>
    </ligand>
</feature>
<feature type="binding site" evidence="1">
    <location>
        <position position="122"/>
    </location>
    <ligand>
        <name>K(+)</name>
        <dbReference type="ChEBI" id="CHEBI:29103"/>
    </ligand>
</feature>
<feature type="binding site" evidence="1">
    <location>
        <begin position="126"/>
        <end position="132"/>
    </location>
    <ligand>
        <name>(6S)-NADPHX</name>
        <dbReference type="ChEBI" id="CHEBI:64076"/>
    </ligand>
</feature>
<feature type="binding site" evidence="1">
    <location>
        <position position="137"/>
    </location>
    <ligand>
        <name>(6S)-NADPHX</name>
        <dbReference type="ChEBI" id="CHEBI:64076"/>
    </ligand>
</feature>
<feature type="binding site" evidence="1">
    <location>
        <position position="155"/>
    </location>
    <ligand>
        <name>(6S)-NADPHX</name>
        <dbReference type="ChEBI" id="CHEBI:64076"/>
    </ligand>
</feature>
<feature type="binding site" evidence="1">
    <location>
        <position position="158"/>
    </location>
    <ligand>
        <name>K(+)</name>
        <dbReference type="ChEBI" id="CHEBI:29103"/>
    </ligand>
</feature>
<accession>A0RY06</accession>
<organism>
    <name type="scientific">Cenarchaeum symbiosum (strain A)</name>
    <dbReference type="NCBI Taxonomy" id="414004"/>
    <lineage>
        <taxon>Archaea</taxon>
        <taxon>Nitrososphaerota</taxon>
        <taxon>Candidatus Cenarchaeales</taxon>
        <taxon>Candidatus Cenarchaeaceae</taxon>
        <taxon>Candidatus Cenarchaeum</taxon>
    </lineage>
</organism>